<comment type="function">
    <text evidence="1">Is able to transfer iron-sulfur clusters to apo-ferredoxin. Multiple cycles of [2Fe2S] cluster formation and transfer are observed, suggesting that IscA acts catalytically. Recruits intracellular free iron so as to provide iron for the assembly of transient iron-sulfur cluster in IscU in the presence of IscS, L-cysteine and the thioredoxin reductase system TrxA/TrxB.</text>
</comment>
<comment type="cofactor">
    <cofactor evidence="1">
        <name>Fe cation</name>
        <dbReference type="ChEBI" id="CHEBI:24875"/>
    </cofactor>
    <text evidence="1">Binds 2 iron ions per dimer. The dimer may bind additional iron ions.</text>
</comment>
<comment type="subunit">
    <text evidence="1">Homodimer; may form tetramers and higher multimers.</text>
</comment>
<comment type="similarity">
    <text evidence="1">Belongs to the HesB/IscA family.</text>
</comment>
<reference key="1">
    <citation type="journal article" date="2009" name="J. Bacteriol.">
        <title>Genomic sequencing reveals regulatory mutations and recombinational events in the widely used MC4100 lineage of Escherichia coli K-12.</title>
        <authorList>
            <person name="Ferenci T."/>
            <person name="Zhou Z."/>
            <person name="Betteridge T."/>
            <person name="Ren Y."/>
            <person name="Liu Y."/>
            <person name="Feng L."/>
            <person name="Reeves P.R."/>
            <person name="Wang L."/>
        </authorList>
    </citation>
    <scope>NUCLEOTIDE SEQUENCE [LARGE SCALE GENOMIC DNA]</scope>
    <source>
        <strain>K12 / MC4100 / BW2952</strain>
    </source>
</reference>
<name>ISCA_ECOBW</name>
<dbReference type="EMBL" id="CP001396">
    <property type="protein sequence ID" value="ACR63084.1"/>
    <property type="molecule type" value="Genomic_DNA"/>
</dbReference>
<dbReference type="RefSeq" id="WP_000028953.1">
    <property type="nucleotide sequence ID" value="NC_012759.1"/>
</dbReference>
<dbReference type="SMR" id="C4ZXA3"/>
<dbReference type="GeneID" id="93774608"/>
<dbReference type="KEGG" id="ebw:BWG_2292"/>
<dbReference type="HOGENOM" id="CLU_069054_5_1_6"/>
<dbReference type="GO" id="GO:0005829">
    <property type="term" value="C:cytosol"/>
    <property type="evidence" value="ECO:0007669"/>
    <property type="project" value="TreeGrafter"/>
</dbReference>
<dbReference type="GO" id="GO:0051537">
    <property type="term" value="F:2 iron, 2 sulfur cluster binding"/>
    <property type="evidence" value="ECO:0007669"/>
    <property type="project" value="TreeGrafter"/>
</dbReference>
<dbReference type="GO" id="GO:0005506">
    <property type="term" value="F:iron ion binding"/>
    <property type="evidence" value="ECO:0007669"/>
    <property type="project" value="UniProtKB-UniRule"/>
</dbReference>
<dbReference type="GO" id="GO:0016226">
    <property type="term" value="P:iron-sulfur cluster assembly"/>
    <property type="evidence" value="ECO:0007669"/>
    <property type="project" value="UniProtKB-UniRule"/>
</dbReference>
<dbReference type="FunFam" id="2.60.300.12:FF:000001">
    <property type="entry name" value="Iron-binding protein IscA"/>
    <property type="match status" value="1"/>
</dbReference>
<dbReference type="Gene3D" id="2.60.300.12">
    <property type="entry name" value="HesB-like domain"/>
    <property type="match status" value="1"/>
</dbReference>
<dbReference type="HAMAP" id="MF_01429">
    <property type="entry name" value="Fe_S_insert_IscA"/>
    <property type="match status" value="1"/>
</dbReference>
<dbReference type="InterPro" id="IPR050322">
    <property type="entry name" value="Fe-S_cluster_asmbl/transfer"/>
</dbReference>
<dbReference type="InterPro" id="IPR000361">
    <property type="entry name" value="FeS_biogenesis"/>
</dbReference>
<dbReference type="InterPro" id="IPR016092">
    <property type="entry name" value="FeS_cluster_insertion"/>
</dbReference>
<dbReference type="InterPro" id="IPR017870">
    <property type="entry name" value="FeS_cluster_insertion_CS"/>
</dbReference>
<dbReference type="InterPro" id="IPR035903">
    <property type="entry name" value="HesB-like_dom_sf"/>
</dbReference>
<dbReference type="InterPro" id="IPR011302">
    <property type="entry name" value="IscA_proteobacteria"/>
</dbReference>
<dbReference type="NCBIfam" id="TIGR00049">
    <property type="entry name" value="iron-sulfur cluster assembly accessory protein"/>
    <property type="match status" value="1"/>
</dbReference>
<dbReference type="NCBIfam" id="TIGR02011">
    <property type="entry name" value="IscA"/>
    <property type="match status" value="1"/>
</dbReference>
<dbReference type="NCBIfam" id="NF007049">
    <property type="entry name" value="PRK09502.1"/>
    <property type="match status" value="1"/>
</dbReference>
<dbReference type="PANTHER" id="PTHR10072:SF41">
    <property type="entry name" value="IRON-SULFUR CLUSTER ASSEMBLY 1 HOMOLOG, MITOCHONDRIAL"/>
    <property type="match status" value="1"/>
</dbReference>
<dbReference type="PANTHER" id="PTHR10072">
    <property type="entry name" value="IRON-SULFUR CLUSTER ASSEMBLY PROTEIN"/>
    <property type="match status" value="1"/>
</dbReference>
<dbReference type="Pfam" id="PF01521">
    <property type="entry name" value="Fe-S_biosyn"/>
    <property type="match status" value="1"/>
</dbReference>
<dbReference type="SUPFAM" id="SSF89360">
    <property type="entry name" value="HesB-like domain"/>
    <property type="match status" value="1"/>
</dbReference>
<dbReference type="PROSITE" id="PS01152">
    <property type="entry name" value="HESB"/>
    <property type="match status" value="1"/>
</dbReference>
<gene>
    <name evidence="1" type="primary">iscA</name>
    <name type="ordered locus">BWG_2292</name>
</gene>
<organism>
    <name type="scientific">Escherichia coli (strain K12 / MC4100 / BW2952)</name>
    <dbReference type="NCBI Taxonomy" id="595496"/>
    <lineage>
        <taxon>Bacteria</taxon>
        <taxon>Pseudomonadati</taxon>
        <taxon>Pseudomonadota</taxon>
        <taxon>Gammaproteobacteria</taxon>
        <taxon>Enterobacterales</taxon>
        <taxon>Enterobacteriaceae</taxon>
        <taxon>Escherichia</taxon>
    </lineage>
</organism>
<accession>C4ZXA3</accession>
<proteinExistence type="inferred from homology"/>
<sequence>MSITLSDSAAARVNTFLANRGKGFGLRLGVRTSGCSGMAYVLEFVDEPTPEDIVFEDKGVKVVVDGKSLQFLDGTQLDFVKEGLNEGFKFTNPNVKDECGCGESFHV</sequence>
<keyword id="KW-0408">Iron</keyword>
<keyword id="KW-0479">Metal-binding</keyword>
<feature type="chain" id="PRO_1000215271" description="Iron-binding protein IscA">
    <location>
        <begin position="1"/>
        <end position="107"/>
    </location>
</feature>
<feature type="binding site" evidence="1">
    <location>
        <position position="35"/>
    </location>
    <ligand>
        <name>Fe cation</name>
        <dbReference type="ChEBI" id="CHEBI:24875"/>
    </ligand>
</feature>
<feature type="binding site" evidence="1">
    <location>
        <position position="99"/>
    </location>
    <ligand>
        <name>Fe cation</name>
        <dbReference type="ChEBI" id="CHEBI:24875"/>
    </ligand>
</feature>
<feature type="binding site" evidence="1">
    <location>
        <position position="101"/>
    </location>
    <ligand>
        <name>Fe cation</name>
        <dbReference type="ChEBI" id="CHEBI:24875"/>
    </ligand>
</feature>
<protein>
    <recommendedName>
        <fullName evidence="1">Iron-binding protein IscA</fullName>
    </recommendedName>
    <alternativeName>
        <fullName evidence="1">Iron-sulfur cluster assembly protein</fullName>
    </alternativeName>
</protein>
<evidence type="ECO:0000255" key="1">
    <source>
        <dbReference type="HAMAP-Rule" id="MF_01429"/>
    </source>
</evidence>